<organism>
    <name type="scientific">Salmonella heidelberg (strain SL476)</name>
    <dbReference type="NCBI Taxonomy" id="454169"/>
    <lineage>
        <taxon>Bacteria</taxon>
        <taxon>Pseudomonadati</taxon>
        <taxon>Pseudomonadota</taxon>
        <taxon>Gammaproteobacteria</taxon>
        <taxon>Enterobacterales</taxon>
        <taxon>Enterobacteriaceae</taxon>
        <taxon>Salmonella</taxon>
    </lineage>
</organism>
<gene>
    <name evidence="1" type="primary">dcyD</name>
    <name type="ordered locus">SeHA_C2168</name>
</gene>
<dbReference type="EC" id="4.4.1.15" evidence="1"/>
<dbReference type="EMBL" id="CP001120">
    <property type="protein sequence ID" value="ACF70040.1"/>
    <property type="molecule type" value="Genomic_DNA"/>
</dbReference>
<dbReference type="RefSeq" id="WP_001128188.1">
    <property type="nucleotide sequence ID" value="NC_011083.1"/>
</dbReference>
<dbReference type="SMR" id="B4T849"/>
<dbReference type="KEGG" id="seh:SeHA_C2168"/>
<dbReference type="HOGENOM" id="CLU_048897_1_0_6"/>
<dbReference type="Proteomes" id="UP000001866">
    <property type="component" value="Chromosome"/>
</dbReference>
<dbReference type="GO" id="GO:0019148">
    <property type="term" value="F:D-cysteine desulfhydrase activity"/>
    <property type="evidence" value="ECO:0007669"/>
    <property type="project" value="UniProtKB-UniRule"/>
</dbReference>
<dbReference type="GO" id="GO:0046416">
    <property type="term" value="P:D-amino acid metabolic process"/>
    <property type="evidence" value="ECO:0007669"/>
    <property type="project" value="UniProtKB-UniRule"/>
</dbReference>
<dbReference type="CDD" id="cd06449">
    <property type="entry name" value="ACCD"/>
    <property type="match status" value="1"/>
</dbReference>
<dbReference type="FunFam" id="3.40.50.1100:FF:000019">
    <property type="entry name" value="D-cysteine desulfhydrase"/>
    <property type="match status" value="1"/>
</dbReference>
<dbReference type="Gene3D" id="3.40.50.1100">
    <property type="match status" value="2"/>
</dbReference>
<dbReference type="HAMAP" id="MF_01045">
    <property type="entry name" value="D_Cys_desulfhydr"/>
    <property type="match status" value="1"/>
</dbReference>
<dbReference type="InterPro" id="IPR027278">
    <property type="entry name" value="ACCD_DCysDesulf"/>
</dbReference>
<dbReference type="InterPro" id="IPR005966">
    <property type="entry name" value="D-Cys_desShydrase"/>
</dbReference>
<dbReference type="InterPro" id="IPR023702">
    <property type="entry name" value="D_Cys_desulphydr_bac"/>
</dbReference>
<dbReference type="InterPro" id="IPR001926">
    <property type="entry name" value="TrpB-like_PALP"/>
</dbReference>
<dbReference type="InterPro" id="IPR036052">
    <property type="entry name" value="TrpB-like_PALP_sf"/>
</dbReference>
<dbReference type="NCBIfam" id="TIGR01275">
    <property type="entry name" value="ACC_deam_rel"/>
    <property type="match status" value="1"/>
</dbReference>
<dbReference type="NCBIfam" id="NF003029">
    <property type="entry name" value="PRK03910.1-1"/>
    <property type="match status" value="1"/>
</dbReference>
<dbReference type="NCBIfam" id="NF003030">
    <property type="entry name" value="PRK03910.1-3"/>
    <property type="match status" value="1"/>
</dbReference>
<dbReference type="NCBIfam" id="NF003032">
    <property type="entry name" value="PRK03910.1-5"/>
    <property type="match status" value="1"/>
</dbReference>
<dbReference type="PANTHER" id="PTHR43780">
    <property type="entry name" value="1-AMINOCYCLOPROPANE-1-CARBOXYLATE DEAMINASE-RELATED"/>
    <property type="match status" value="1"/>
</dbReference>
<dbReference type="PANTHER" id="PTHR43780:SF2">
    <property type="entry name" value="1-AMINOCYCLOPROPANE-1-CARBOXYLATE DEAMINASE-RELATED"/>
    <property type="match status" value="1"/>
</dbReference>
<dbReference type="Pfam" id="PF00291">
    <property type="entry name" value="PALP"/>
    <property type="match status" value="1"/>
</dbReference>
<dbReference type="PIRSF" id="PIRSF006278">
    <property type="entry name" value="ACCD_DCysDesulf"/>
    <property type="match status" value="1"/>
</dbReference>
<dbReference type="SUPFAM" id="SSF53686">
    <property type="entry name" value="Tryptophan synthase beta subunit-like PLP-dependent enzymes"/>
    <property type="match status" value="1"/>
</dbReference>
<accession>B4T849</accession>
<comment type="function">
    <text evidence="1">Catalyzes the alpha,beta-elimination reaction of D-cysteine and of several D-cysteine derivatives. It could be a defense mechanism against D-cysteine.</text>
</comment>
<comment type="catalytic activity">
    <reaction evidence="1">
        <text>D-cysteine + H2O = hydrogen sulfide + pyruvate + NH4(+) + H(+)</text>
        <dbReference type="Rhea" id="RHEA:11268"/>
        <dbReference type="ChEBI" id="CHEBI:15361"/>
        <dbReference type="ChEBI" id="CHEBI:15377"/>
        <dbReference type="ChEBI" id="CHEBI:15378"/>
        <dbReference type="ChEBI" id="CHEBI:28938"/>
        <dbReference type="ChEBI" id="CHEBI:29919"/>
        <dbReference type="ChEBI" id="CHEBI:35236"/>
        <dbReference type="EC" id="4.4.1.15"/>
    </reaction>
</comment>
<comment type="cofactor">
    <cofactor evidence="1">
        <name>pyridoxal 5'-phosphate</name>
        <dbReference type="ChEBI" id="CHEBI:597326"/>
    </cofactor>
</comment>
<comment type="subunit">
    <text evidence="1">Homodimer.</text>
</comment>
<comment type="similarity">
    <text evidence="1">Belongs to the ACC deaminase/D-cysteine desulfhydrase family.</text>
</comment>
<name>DCYD_SALHS</name>
<reference key="1">
    <citation type="journal article" date="2011" name="J. Bacteriol.">
        <title>Comparative genomics of 28 Salmonella enterica isolates: evidence for CRISPR-mediated adaptive sublineage evolution.</title>
        <authorList>
            <person name="Fricke W.F."/>
            <person name="Mammel M.K."/>
            <person name="McDermott P.F."/>
            <person name="Tartera C."/>
            <person name="White D.G."/>
            <person name="Leclerc J.E."/>
            <person name="Ravel J."/>
            <person name="Cebula T.A."/>
        </authorList>
    </citation>
    <scope>NUCLEOTIDE SEQUENCE [LARGE SCALE GENOMIC DNA]</scope>
    <source>
        <strain>SL476</strain>
    </source>
</reference>
<feature type="chain" id="PRO_1000136169" description="D-cysteine desulfhydrase">
    <location>
        <begin position="1"/>
        <end position="328"/>
    </location>
</feature>
<feature type="modified residue" description="N6-(pyridoxal phosphate)lysine" evidence="1">
    <location>
        <position position="51"/>
    </location>
</feature>
<proteinExistence type="inferred from homology"/>
<protein>
    <recommendedName>
        <fullName evidence="1">D-cysteine desulfhydrase</fullName>
        <ecNumber evidence="1">4.4.1.15</ecNumber>
    </recommendedName>
</protein>
<sequence length="328" mass="34877">MPLHHLTRFPRLELIGAPTPLEYLPRLSDYLGREIYIKRDDVTPIAMGGNKLRKLEFLVADALREGADTLITAGAIQSNHVRQTAAVAAKLGLHCVALLENPIGTTAENYLTNGNRLLLDLFNTQIEMCDALTDPDAQLQTLATRIEAQGFRPYVIPVGGSSALGAMGYVESALEIAQQCEEVVGLSSVVVASGSAGTHAGLAVGLEHLMPDVELIGVTVSRSVAEQKPKVIALQQAIAGQLALTATADIHLWDDYFAPGYGVPNDAGMEAVKLLASLEGVLLDPVYTGKAMAGLIDGISQKRFNDDGPILFIHTGGAPALFAYHPHV</sequence>
<evidence type="ECO:0000255" key="1">
    <source>
        <dbReference type="HAMAP-Rule" id="MF_01045"/>
    </source>
</evidence>
<keyword id="KW-0456">Lyase</keyword>
<keyword id="KW-0663">Pyridoxal phosphate</keyword>